<organism>
    <name type="scientific">Onion yellows phytoplasma (strain OY-M)</name>
    <dbReference type="NCBI Taxonomy" id="262768"/>
    <lineage>
        <taxon>Bacteria</taxon>
        <taxon>Bacillati</taxon>
        <taxon>Mycoplasmatota</taxon>
        <taxon>Mollicutes</taxon>
        <taxon>Acholeplasmatales</taxon>
        <taxon>Acholeplasmataceae</taxon>
        <taxon>Candidatus Phytoplasma</taxon>
        <taxon>16SrI (Aster yellows group)</taxon>
    </lineage>
</organism>
<dbReference type="EMBL" id="AP006628">
    <property type="protein sequence ID" value="BAD04827.1"/>
    <property type="molecule type" value="Genomic_DNA"/>
</dbReference>
<dbReference type="SMR" id="Q6YPI5"/>
<dbReference type="STRING" id="262768.PAM_742"/>
<dbReference type="KEGG" id="poy:PAM_742"/>
<dbReference type="eggNOG" id="COG0292">
    <property type="taxonomic scope" value="Bacteria"/>
</dbReference>
<dbReference type="HOGENOM" id="CLU_082429_0_0_14"/>
<dbReference type="BioCyc" id="OYEL262768:G1G26-897-MONOMER"/>
<dbReference type="Proteomes" id="UP000002523">
    <property type="component" value="Chromosome"/>
</dbReference>
<dbReference type="GO" id="GO:1990904">
    <property type="term" value="C:ribonucleoprotein complex"/>
    <property type="evidence" value="ECO:0007669"/>
    <property type="project" value="UniProtKB-KW"/>
</dbReference>
<dbReference type="GO" id="GO:0005840">
    <property type="term" value="C:ribosome"/>
    <property type="evidence" value="ECO:0007669"/>
    <property type="project" value="UniProtKB-KW"/>
</dbReference>
<dbReference type="GO" id="GO:0019843">
    <property type="term" value="F:rRNA binding"/>
    <property type="evidence" value="ECO:0007669"/>
    <property type="project" value="UniProtKB-UniRule"/>
</dbReference>
<dbReference type="GO" id="GO:0003735">
    <property type="term" value="F:structural constituent of ribosome"/>
    <property type="evidence" value="ECO:0007669"/>
    <property type="project" value="InterPro"/>
</dbReference>
<dbReference type="GO" id="GO:0006353">
    <property type="term" value="P:DNA-templated transcription termination"/>
    <property type="evidence" value="ECO:0007669"/>
    <property type="project" value="InterPro"/>
</dbReference>
<dbReference type="GO" id="GO:0000027">
    <property type="term" value="P:ribosomal large subunit assembly"/>
    <property type="evidence" value="ECO:0007669"/>
    <property type="project" value="UniProtKB-UniRule"/>
</dbReference>
<dbReference type="GO" id="GO:0006412">
    <property type="term" value="P:translation"/>
    <property type="evidence" value="ECO:0007669"/>
    <property type="project" value="InterPro"/>
</dbReference>
<dbReference type="CDD" id="cd07026">
    <property type="entry name" value="Ribosomal_L20"/>
    <property type="match status" value="1"/>
</dbReference>
<dbReference type="FunFam" id="1.10.1900.20:FF:000001">
    <property type="entry name" value="50S ribosomal protein L20"/>
    <property type="match status" value="1"/>
</dbReference>
<dbReference type="Gene3D" id="6.10.160.10">
    <property type="match status" value="1"/>
</dbReference>
<dbReference type="Gene3D" id="1.10.1900.20">
    <property type="entry name" value="Ribosomal protein L20"/>
    <property type="match status" value="1"/>
</dbReference>
<dbReference type="HAMAP" id="MF_00382">
    <property type="entry name" value="Ribosomal_bL20"/>
    <property type="match status" value="1"/>
</dbReference>
<dbReference type="InterPro" id="IPR011112">
    <property type="entry name" value="Rho-like_N"/>
</dbReference>
<dbReference type="InterPro" id="IPR036269">
    <property type="entry name" value="Rho_N_sf"/>
</dbReference>
<dbReference type="InterPro" id="IPR005813">
    <property type="entry name" value="Ribosomal_bL20"/>
</dbReference>
<dbReference type="InterPro" id="IPR035566">
    <property type="entry name" value="Ribosomal_protein_bL20_C"/>
</dbReference>
<dbReference type="NCBIfam" id="NF011109">
    <property type="entry name" value="PRK14537.1"/>
    <property type="match status" value="1"/>
</dbReference>
<dbReference type="NCBIfam" id="TIGR01032">
    <property type="entry name" value="rplT_bact"/>
    <property type="match status" value="1"/>
</dbReference>
<dbReference type="PANTHER" id="PTHR10986">
    <property type="entry name" value="39S RIBOSOMAL PROTEIN L20"/>
    <property type="match status" value="1"/>
</dbReference>
<dbReference type="Pfam" id="PF07498">
    <property type="entry name" value="Rho_N"/>
    <property type="match status" value="1"/>
</dbReference>
<dbReference type="Pfam" id="PF00453">
    <property type="entry name" value="Ribosomal_L20"/>
    <property type="match status" value="1"/>
</dbReference>
<dbReference type="PRINTS" id="PR00062">
    <property type="entry name" value="RIBOSOMALL20"/>
</dbReference>
<dbReference type="SMART" id="SM00959">
    <property type="entry name" value="Rho_N"/>
    <property type="match status" value="1"/>
</dbReference>
<dbReference type="SUPFAM" id="SSF68912">
    <property type="entry name" value="Rho N-terminal domain-like"/>
    <property type="match status" value="1"/>
</dbReference>
<dbReference type="SUPFAM" id="SSF74731">
    <property type="entry name" value="Ribosomal protein L20"/>
    <property type="match status" value="1"/>
</dbReference>
<name>RL20_ONYPE</name>
<accession>Q6YPI5</accession>
<feature type="chain" id="PRO_0000355476" description="Large ribosomal subunit protein bL20">
    <location>
        <begin position="1"/>
        <end position="207"/>
    </location>
</feature>
<feature type="region of interest" description="Disordered" evidence="2">
    <location>
        <begin position="117"/>
        <end position="161"/>
    </location>
</feature>
<feature type="compositionally biased region" description="Basic and acidic residues" evidence="2">
    <location>
        <begin position="140"/>
        <end position="149"/>
    </location>
</feature>
<gene>
    <name evidence="1" type="primary">rplT</name>
    <name type="ordered locus">PAM_742</name>
</gene>
<proteinExistence type="inferred from homology"/>
<comment type="function">
    <text evidence="1">Binds directly to 23S ribosomal RNA and is necessary for the in vitro assembly process of the 50S ribosomal subunit. It is not involved in the protein synthesizing functions of that subunit.</text>
</comment>
<comment type="similarity">
    <text evidence="1">Belongs to the bacterial ribosomal protein bL20 family.</text>
</comment>
<evidence type="ECO:0000255" key="1">
    <source>
        <dbReference type="HAMAP-Rule" id="MF_00382"/>
    </source>
</evidence>
<evidence type="ECO:0000256" key="2">
    <source>
        <dbReference type="SAM" id="MobiDB-lite"/>
    </source>
</evidence>
<evidence type="ECO:0000305" key="3"/>
<keyword id="KW-0687">Ribonucleoprotein</keyword>
<keyword id="KW-0689">Ribosomal protein</keyword>
<keyword id="KW-0694">RNA-binding</keyword>
<keyword id="KW-0699">rRNA-binding</keyword>
<reference key="1">
    <citation type="journal article" date="2004" name="Nat. Genet.">
        <title>Reductive evolution suggested from the complete genome sequence of a plant-pathogenic phytoplasma.</title>
        <authorList>
            <person name="Oshima K."/>
            <person name="Kakizawa S."/>
            <person name="Nishigawa H."/>
            <person name="Jung H.-Y."/>
            <person name="Wei W."/>
            <person name="Suzuki S."/>
            <person name="Arashida R."/>
            <person name="Nakata D."/>
            <person name="Miyata S."/>
            <person name="Ugaki M."/>
            <person name="Namba S."/>
        </authorList>
    </citation>
    <scope>NUCLEOTIDE SEQUENCE [LARGE SCALE GENOMIC DNA]</scope>
    <source>
        <strain>OY-M</strain>
    </source>
</reference>
<sequence>MAKISFTPARHRRRKKVLKMAKGYFGSKSTLYKTAHEQVMRSLQYAYRDRKQRKRDFRKLWISRINAGAMLCGMQYSYLMHGLALAKVDVNRKVLADLAHLQPGPVESVKAVEVLQQETQPQPEEKTSLQPEKVLSTELSEEKSDDTLETKPQTTQVKAKKPSLDLSKMLLHELKKLAKEHKVPNFHKLKKAEIVTALKKALAKKII</sequence>
<protein>
    <recommendedName>
        <fullName evidence="1">Large ribosomal subunit protein bL20</fullName>
    </recommendedName>
    <alternativeName>
        <fullName evidence="3">50S ribosomal protein L20</fullName>
    </alternativeName>
</protein>